<dbReference type="EMBL" id="CP000948">
    <property type="protein sequence ID" value="ACB04356.1"/>
    <property type="molecule type" value="Genomic_DNA"/>
</dbReference>
<dbReference type="RefSeq" id="WP_001216368.1">
    <property type="nucleotide sequence ID" value="NC_010473.1"/>
</dbReference>
<dbReference type="SMR" id="B1X6E6"/>
<dbReference type="GeneID" id="97442834"/>
<dbReference type="KEGG" id="ecd:ECDH10B_3469"/>
<dbReference type="HOGENOM" id="CLU_074407_2_0_6"/>
<dbReference type="GO" id="GO:0022625">
    <property type="term" value="C:cytosolic large ribosomal subunit"/>
    <property type="evidence" value="ECO:0007669"/>
    <property type="project" value="TreeGrafter"/>
</dbReference>
<dbReference type="GO" id="GO:0003735">
    <property type="term" value="F:structural constituent of ribosome"/>
    <property type="evidence" value="ECO:0007669"/>
    <property type="project" value="InterPro"/>
</dbReference>
<dbReference type="GO" id="GO:0006412">
    <property type="term" value="P:translation"/>
    <property type="evidence" value="ECO:0007669"/>
    <property type="project" value="UniProtKB-UniRule"/>
</dbReference>
<dbReference type="FunFam" id="3.90.1030.10:FF:000001">
    <property type="entry name" value="50S ribosomal protein L17"/>
    <property type="match status" value="1"/>
</dbReference>
<dbReference type="Gene3D" id="3.90.1030.10">
    <property type="entry name" value="Ribosomal protein L17"/>
    <property type="match status" value="1"/>
</dbReference>
<dbReference type="HAMAP" id="MF_01368">
    <property type="entry name" value="Ribosomal_bL17"/>
    <property type="match status" value="1"/>
</dbReference>
<dbReference type="InterPro" id="IPR000456">
    <property type="entry name" value="Ribosomal_bL17"/>
</dbReference>
<dbReference type="InterPro" id="IPR047859">
    <property type="entry name" value="Ribosomal_bL17_CS"/>
</dbReference>
<dbReference type="InterPro" id="IPR036373">
    <property type="entry name" value="Ribosomal_bL17_sf"/>
</dbReference>
<dbReference type="NCBIfam" id="TIGR00059">
    <property type="entry name" value="L17"/>
    <property type="match status" value="1"/>
</dbReference>
<dbReference type="PANTHER" id="PTHR14413:SF16">
    <property type="entry name" value="LARGE RIBOSOMAL SUBUNIT PROTEIN BL17M"/>
    <property type="match status" value="1"/>
</dbReference>
<dbReference type="PANTHER" id="PTHR14413">
    <property type="entry name" value="RIBOSOMAL PROTEIN L17"/>
    <property type="match status" value="1"/>
</dbReference>
<dbReference type="Pfam" id="PF01196">
    <property type="entry name" value="Ribosomal_L17"/>
    <property type="match status" value="1"/>
</dbReference>
<dbReference type="SUPFAM" id="SSF64263">
    <property type="entry name" value="Prokaryotic ribosomal protein L17"/>
    <property type="match status" value="1"/>
</dbReference>
<dbReference type="PROSITE" id="PS01167">
    <property type="entry name" value="RIBOSOMAL_L17"/>
    <property type="match status" value="1"/>
</dbReference>
<protein>
    <recommendedName>
        <fullName evidence="1">Large ribosomal subunit protein bL17</fullName>
    </recommendedName>
    <alternativeName>
        <fullName evidence="2">50S ribosomal protein L17</fullName>
    </alternativeName>
</protein>
<evidence type="ECO:0000255" key="1">
    <source>
        <dbReference type="HAMAP-Rule" id="MF_01368"/>
    </source>
</evidence>
<evidence type="ECO:0000305" key="2"/>
<keyword id="KW-0687">Ribonucleoprotein</keyword>
<keyword id="KW-0689">Ribosomal protein</keyword>
<organism>
    <name type="scientific">Escherichia coli (strain K12 / DH10B)</name>
    <dbReference type="NCBI Taxonomy" id="316385"/>
    <lineage>
        <taxon>Bacteria</taxon>
        <taxon>Pseudomonadati</taxon>
        <taxon>Pseudomonadota</taxon>
        <taxon>Gammaproteobacteria</taxon>
        <taxon>Enterobacterales</taxon>
        <taxon>Enterobacteriaceae</taxon>
        <taxon>Escherichia</taxon>
    </lineage>
</organism>
<feature type="chain" id="PRO_1000144420" description="Large ribosomal subunit protein bL17">
    <location>
        <begin position="1"/>
        <end position="127"/>
    </location>
</feature>
<proteinExistence type="inferred from homology"/>
<name>RL17_ECODH</name>
<comment type="subunit">
    <text evidence="1">Part of the 50S ribosomal subunit. Contacts protein L32.</text>
</comment>
<comment type="similarity">
    <text evidence="1">Belongs to the bacterial ribosomal protein bL17 family.</text>
</comment>
<gene>
    <name evidence="1" type="primary">rplQ</name>
    <name type="ordered locus">ECDH10B_3469</name>
</gene>
<sequence>MRHRKSGRQLNRNSSHRQAMFRNMAGSLVRHEIIKTTLPKAKELRRVVEPLITLAKTDSVANRRLAFARTRDNEIVAKLFNELGPRFASRAGGYTRILKCGFRAGDNAPMAYIELVDRSEKAEAAAE</sequence>
<reference key="1">
    <citation type="journal article" date="2008" name="J. Bacteriol.">
        <title>The complete genome sequence of Escherichia coli DH10B: insights into the biology of a laboratory workhorse.</title>
        <authorList>
            <person name="Durfee T."/>
            <person name="Nelson R."/>
            <person name="Baldwin S."/>
            <person name="Plunkett G. III"/>
            <person name="Burland V."/>
            <person name="Mau B."/>
            <person name="Petrosino J.F."/>
            <person name="Qin X."/>
            <person name="Muzny D.M."/>
            <person name="Ayele M."/>
            <person name="Gibbs R.A."/>
            <person name="Csorgo B."/>
            <person name="Posfai G."/>
            <person name="Weinstock G.M."/>
            <person name="Blattner F.R."/>
        </authorList>
    </citation>
    <scope>NUCLEOTIDE SEQUENCE [LARGE SCALE GENOMIC DNA]</scope>
    <source>
        <strain>K12 / DH10B</strain>
    </source>
</reference>
<accession>B1X6E6</accession>